<name>YHFR_SALTI</name>
<reference key="1">
    <citation type="journal article" date="2001" name="Nature">
        <title>Complete genome sequence of a multiple drug resistant Salmonella enterica serovar Typhi CT18.</title>
        <authorList>
            <person name="Parkhill J."/>
            <person name="Dougan G."/>
            <person name="James K.D."/>
            <person name="Thomson N.R."/>
            <person name="Pickard D."/>
            <person name="Wain J."/>
            <person name="Churcher C.M."/>
            <person name="Mungall K.L."/>
            <person name="Bentley S.D."/>
            <person name="Holden M.T.G."/>
            <person name="Sebaihia M."/>
            <person name="Baker S."/>
            <person name="Basham D."/>
            <person name="Brooks K."/>
            <person name="Chillingworth T."/>
            <person name="Connerton P."/>
            <person name="Cronin A."/>
            <person name="Davis P."/>
            <person name="Davies R.M."/>
            <person name="Dowd L."/>
            <person name="White N."/>
            <person name="Farrar J."/>
            <person name="Feltwell T."/>
            <person name="Hamlin N."/>
            <person name="Haque A."/>
            <person name="Hien T.T."/>
            <person name="Holroyd S."/>
            <person name="Jagels K."/>
            <person name="Krogh A."/>
            <person name="Larsen T.S."/>
            <person name="Leather S."/>
            <person name="Moule S."/>
            <person name="O'Gaora P."/>
            <person name="Parry C."/>
            <person name="Quail M.A."/>
            <person name="Rutherford K.M."/>
            <person name="Simmonds M."/>
            <person name="Skelton J."/>
            <person name="Stevens K."/>
            <person name="Whitehead S."/>
            <person name="Barrell B.G."/>
        </authorList>
    </citation>
    <scope>NUCLEOTIDE SEQUENCE [LARGE SCALE GENOMIC DNA]</scope>
    <source>
        <strain>CT18</strain>
    </source>
</reference>
<reference key="2">
    <citation type="journal article" date="2003" name="J. Bacteriol.">
        <title>Comparative genomics of Salmonella enterica serovar Typhi strains Ty2 and CT18.</title>
        <authorList>
            <person name="Deng W."/>
            <person name="Liou S.-R."/>
            <person name="Plunkett G. III"/>
            <person name="Mayhew G.F."/>
            <person name="Rose D.J."/>
            <person name="Burland V."/>
            <person name="Kodoyianni V."/>
            <person name="Schwartz D.C."/>
            <person name="Blattner F.R."/>
        </authorList>
    </citation>
    <scope>NUCLEOTIDE SEQUENCE [LARGE SCALE GENOMIC DNA]</scope>
    <source>
        <strain>ATCC 700931 / Ty2</strain>
    </source>
</reference>
<comment type="subcellular location">
    <subcellularLocation>
        <location evidence="2">Membrane</location>
        <topology evidence="2">Single-pass membrane protein</topology>
    </subcellularLocation>
</comment>
<comment type="similarity">
    <text evidence="2">Belongs to the serine esterase family.</text>
</comment>
<accession>Q8Z4M8</accession>
<feature type="chain" id="PRO_0000169254" description="Uncharacterized protein YfhR">
    <location>
        <begin position="1"/>
        <end position="292"/>
    </location>
</feature>
<feature type="transmembrane region" description="Helical" evidence="1">
    <location>
        <begin position="13"/>
        <end position="35"/>
    </location>
</feature>
<gene>
    <name type="primary">yhfR</name>
    <name type="ordered locus">STY2793</name>
    <name type="ordered locus">t0309</name>
</gene>
<protein>
    <recommendedName>
        <fullName>Uncharacterized protein YfhR</fullName>
    </recommendedName>
</protein>
<keyword id="KW-0472">Membrane</keyword>
<keyword id="KW-0812">Transmembrane</keyword>
<keyword id="KW-1133">Transmembrane helix</keyword>
<sequence length="292" mass="32309">MTLQHTRRIVKSLFILFIIVVCIYLLPRVAINAFYYPDNKVYGPTPAEAESITFTAKDGTHLHGWFIPTAFGRPENAVATVIHVHGNAGNMSAHWPLVSWLPERNVNLFMFDYRGFGESEGTPSQEGLLNDTKSAIDYVRHRADVNPERLVLLGQSLGGNNVLAAVGHCVGCANMRYADQAGIRAIVLDSTFSSYSSIANQMIPGSGYLLDDRYSADRNIASVSPIPVLILHGTADHVIPWQDSEKLYALAREPKQKIFIPDGDHIDAFSGRYANLYRDAMINFIQTALSAK</sequence>
<evidence type="ECO:0000255" key="1"/>
<evidence type="ECO:0000305" key="2"/>
<organism>
    <name type="scientific">Salmonella typhi</name>
    <dbReference type="NCBI Taxonomy" id="90370"/>
    <lineage>
        <taxon>Bacteria</taxon>
        <taxon>Pseudomonadati</taxon>
        <taxon>Pseudomonadota</taxon>
        <taxon>Gammaproteobacteria</taxon>
        <taxon>Enterobacterales</taxon>
        <taxon>Enterobacteriaceae</taxon>
        <taxon>Salmonella</taxon>
    </lineage>
</organism>
<proteinExistence type="inferred from homology"/>
<dbReference type="EMBL" id="AL513382">
    <property type="protein sequence ID" value="CAD02750.1"/>
    <property type="molecule type" value="Genomic_DNA"/>
</dbReference>
<dbReference type="EMBL" id="AE014613">
    <property type="protein sequence ID" value="AAO68033.1"/>
    <property type="molecule type" value="Genomic_DNA"/>
</dbReference>
<dbReference type="RefSeq" id="NP_457078.1">
    <property type="nucleotide sequence ID" value="NC_003198.1"/>
</dbReference>
<dbReference type="RefSeq" id="WP_000174949.1">
    <property type="nucleotide sequence ID" value="NZ_WSUR01000007.1"/>
</dbReference>
<dbReference type="SMR" id="Q8Z4M8"/>
<dbReference type="STRING" id="220341.gene:17586684"/>
<dbReference type="ESTHER" id="salty-STM2547">
    <property type="family name" value="ABHD13-BEM46"/>
</dbReference>
<dbReference type="MEROPS" id="S09.A36"/>
<dbReference type="KEGG" id="stt:t0309"/>
<dbReference type="KEGG" id="sty:STY2793"/>
<dbReference type="PATRIC" id="fig|220341.7.peg.2839"/>
<dbReference type="eggNOG" id="COG1073">
    <property type="taxonomic scope" value="Bacteria"/>
</dbReference>
<dbReference type="HOGENOM" id="CLU_029375_2_1_6"/>
<dbReference type="OMA" id="WLPEQGY"/>
<dbReference type="OrthoDB" id="9805123at2"/>
<dbReference type="Proteomes" id="UP000000541">
    <property type="component" value="Chromosome"/>
</dbReference>
<dbReference type="Proteomes" id="UP000002670">
    <property type="component" value="Chromosome"/>
</dbReference>
<dbReference type="GO" id="GO:0016020">
    <property type="term" value="C:membrane"/>
    <property type="evidence" value="ECO:0007669"/>
    <property type="project" value="UniProtKB-SubCell"/>
</dbReference>
<dbReference type="Gene3D" id="3.40.50.1820">
    <property type="entry name" value="alpha/beta hydrolase"/>
    <property type="match status" value="1"/>
</dbReference>
<dbReference type="InterPro" id="IPR029058">
    <property type="entry name" value="AB_hydrolase_fold"/>
</dbReference>
<dbReference type="InterPro" id="IPR022742">
    <property type="entry name" value="Hydrolase_4"/>
</dbReference>
<dbReference type="PANTHER" id="PTHR12277">
    <property type="entry name" value="ALPHA/BETA HYDROLASE DOMAIN-CONTAINING PROTEIN"/>
    <property type="match status" value="1"/>
</dbReference>
<dbReference type="PANTHER" id="PTHR12277:SF81">
    <property type="entry name" value="PROTEIN ABHD13"/>
    <property type="match status" value="1"/>
</dbReference>
<dbReference type="Pfam" id="PF12146">
    <property type="entry name" value="Hydrolase_4"/>
    <property type="match status" value="1"/>
</dbReference>
<dbReference type="SUPFAM" id="SSF53474">
    <property type="entry name" value="alpha/beta-Hydrolases"/>
    <property type="match status" value="1"/>
</dbReference>